<gene>
    <name evidence="1" type="primary">recA</name>
    <name type="ordered locus">PXO_00149</name>
</gene>
<feature type="chain" id="PRO_1000114383" description="Protein RecA">
    <location>
        <begin position="1"/>
        <end position="344"/>
    </location>
</feature>
<feature type="binding site" evidence="1">
    <location>
        <begin position="65"/>
        <end position="72"/>
    </location>
    <ligand>
        <name>ATP</name>
        <dbReference type="ChEBI" id="CHEBI:30616"/>
    </ligand>
</feature>
<evidence type="ECO:0000255" key="1">
    <source>
        <dbReference type="HAMAP-Rule" id="MF_00268"/>
    </source>
</evidence>
<name>RECA_XANOP</name>
<accession>B2SUC8</accession>
<comment type="function">
    <text evidence="1">Can catalyze the hydrolysis of ATP in the presence of single-stranded DNA, the ATP-dependent uptake of single-stranded DNA by duplex DNA, and the ATP-dependent hybridization of homologous single-stranded DNAs. It interacts with LexA causing its activation and leading to its autocatalytic cleavage.</text>
</comment>
<comment type="subcellular location">
    <subcellularLocation>
        <location evidence="1">Cytoplasm</location>
    </subcellularLocation>
</comment>
<comment type="similarity">
    <text evidence="1">Belongs to the RecA family.</text>
</comment>
<organism>
    <name type="scientific">Xanthomonas oryzae pv. oryzae (strain PXO99A)</name>
    <dbReference type="NCBI Taxonomy" id="360094"/>
    <lineage>
        <taxon>Bacteria</taxon>
        <taxon>Pseudomonadati</taxon>
        <taxon>Pseudomonadota</taxon>
        <taxon>Gammaproteobacteria</taxon>
        <taxon>Lysobacterales</taxon>
        <taxon>Lysobacteraceae</taxon>
        <taxon>Xanthomonas</taxon>
    </lineage>
</organism>
<reference key="1">
    <citation type="journal article" date="2008" name="BMC Genomics">
        <title>Genome sequence and rapid evolution of the rice pathogen Xanthomonas oryzae pv. oryzae PXO99A.</title>
        <authorList>
            <person name="Salzberg S.L."/>
            <person name="Sommer D.D."/>
            <person name="Schatz M.C."/>
            <person name="Phillippy A.M."/>
            <person name="Rabinowicz P.D."/>
            <person name="Tsuge S."/>
            <person name="Furutani A."/>
            <person name="Ochiai H."/>
            <person name="Delcher A.L."/>
            <person name="Kelley D."/>
            <person name="Madupu R."/>
            <person name="Puiu D."/>
            <person name="Radune D."/>
            <person name="Shumway M."/>
            <person name="Trapnell C."/>
            <person name="Aparna G."/>
            <person name="Jha G."/>
            <person name="Pandey A."/>
            <person name="Patil P.B."/>
            <person name="Ishihara H."/>
            <person name="Meyer D.F."/>
            <person name="Szurek B."/>
            <person name="Verdier V."/>
            <person name="Koebnik R."/>
            <person name="Dow J.M."/>
            <person name="Ryan R.P."/>
            <person name="Hirata H."/>
            <person name="Tsuyumu S."/>
            <person name="Won Lee S."/>
            <person name="Seo Y.-S."/>
            <person name="Sriariyanum M."/>
            <person name="Ronald P.C."/>
            <person name="Sonti R.V."/>
            <person name="Van Sluys M.-A."/>
            <person name="Leach J.E."/>
            <person name="White F.F."/>
            <person name="Bogdanove A.J."/>
        </authorList>
    </citation>
    <scope>NUCLEOTIDE SEQUENCE [LARGE SCALE GENOMIC DNA]</scope>
    <source>
        <strain>PXO99A</strain>
    </source>
</reference>
<keyword id="KW-0067">ATP-binding</keyword>
<keyword id="KW-0963">Cytoplasm</keyword>
<keyword id="KW-0227">DNA damage</keyword>
<keyword id="KW-0233">DNA recombination</keyword>
<keyword id="KW-0234">DNA repair</keyword>
<keyword id="KW-0238">DNA-binding</keyword>
<keyword id="KW-0547">Nucleotide-binding</keyword>
<keyword id="KW-0742">SOS response</keyword>
<proteinExistence type="inferred from homology"/>
<sequence length="344" mass="37203">MDENKKRALAAALSQIEKQFGKGSVMRMGDRVIEAVEVIPTGSLMLDIALGTGGLPKGRVVEIYGPESSGKTTLTLQAIAQCQKLGGTAAFIDAEHALDPVYAAKLGVNVDDLLLSQPDTGEQALEIADMLVRSSSVDIVVIDSVAALTPKAEIEGEMGDQLPGLQARLMSQALRKLTGNIKRSNTLVVFINQLRMKIGVMMPGQSPEVTTGGNALKFYASVRLDIRRIGAIKKGDEIIGNQTKIKVVKNKLAPPFKQVVTEILYGEGISREGELIDMGVEAKLVEKAGAWYSYGDERIGQGKDNARTYLRDNPQVAVRLEAELREKFQPAEAPREAGDDEEKE</sequence>
<protein>
    <recommendedName>
        <fullName evidence="1">Protein RecA</fullName>
    </recommendedName>
    <alternativeName>
        <fullName evidence="1">Recombinase A</fullName>
    </alternativeName>
</protein>
<dbReference type="EMBL" id="CP000967">
    <property type="protein sequence ID" value="ACD58318.1"/>
    <property type="molecule type" value="Genomic_DNA"/>
</dbReference>
<dbReference type="RefSeq" id="WP_011408884.1">
    <property type="nucleotide sequence ID" value="NC_010717.2"/>
</dbReference>
<dbReference type="SMR" id="B2SUC8"/>
<dbReference type="KEGG" id="xop:PXO_00149"/>
<dbReference type="eggNOG" id="COG0468">
    <property type="taxonomic scope" value="Bacteria"/>
</dbReference>
<dbReference type="HOGENOM" id="CLU_040469_1_2_6"/>
<dbReference type="Proteomes" id="UP000001740">
    <property type="component" value="Chromosome"/>
</dbReference>
<dbReference type="GO" id="GO:0005829">
    <property type="term" value="C:cytosol"/>
    <property type="evidence" value="ECO:0007669"/>
    <property type="project" value="TreeGrafter"/>
</dbReference>
<dbReference type="GO" id="GO:0005524">
    <property type="term" value="F:ATP binding"/>
    <property type="evidence" value="ECO:0007669"/>
    <property type="project" value="UniProtKB-UniRule"/>
</dbReference>
<dbReference type="GO" id="GO:0016887">
    <property type="term" value="F:ATP hydrolysis activity"/>
    <property type="evidence" value="ECO:0007669"/>
    <property type="project" value="InterPro"/>
</dbReference>
<dbReference type="GO" id="GO:0140664">
    <property type="term" value="F:ATP-dependent DNA damage sensor activity"/>
    <property type="evidence" value="ECO:0007669"/>
    <property type="project" value="InterPro"/>
</dbReference>
<dbReference type="GO" id="GO:0003684">
    <property type="term" value="F:damaged DNA binding"/>
    <property type="evidence" value="ECO:0007669"/>
    <property type="project" value="UniProtKB-UniRule"/>
</dbReference>
<dbReference type="GO" id="GO:0003697">
    <property type="term" value="F:single-stranded DNA binding"/>
    <property type="evidence" value="ECO:0007669"/>
    <property type="project" value="UniProtKB-UniRule"/>
</dbReference>
<dbReference type="GO" id="GO:0006310">
    <property type="term" value="P:DNA recombination"/>
    <property type="evidence" value="ECO:0007669"/>
    <property type="project" value="UniProtKB-UniRule"/>
</dbReference>
<dbReference type="GO" id="GO:0006281">
    <property type="term" value="P:DNA repair"/>
    <property type="evidence" value="ECO:0007669"/>
    <property type="project" value="UniProtKB-UniRule"/>
</dbReference>
<dbReference type="GO" id="GO:0009432">
    <property type="term" value="P:SOS response"/>
    <property type="evidence" value="ECO:0007669"/>
    <property type="project" value="UniProtKB-UniRule"/>
</dbReference>
<dbReference type="CDD" id="cd00983">
    <property type="entry name" value="RecA"/>
    <property type="match status" value="1"/>
</dbReference>
<dbReference type="FunFam" id="3.40.50.300:FF:000087">
    <property type="entry name" value="Recombinase RecA"/>
    <property type="match status" value="1"/>
</dbReference>
<dbReference type="Gene3D" id="3.40.50.300">
    <property type="entry name" value="P-loop containing nucleotide triphosphate hydrolases"/>
    <property type="match status" value="1"/>
</dbReference>
<dbReference type="HAMAP" id="MF_00268">
    <property type="entry name" value="RecA"/>
    <property type="match status" value="1"/>
</dbReference>
<dbReference type="InterPro" id="IPR003593">
    <property type="entry name" value="AAA+_ATPase"/>
</dbReference>
<dbReference type="InterPro" id="IPR013765">
    <property type="entry name" value="DNA_recomb/repair_RecA"/>
</dbReference>
<dbReference type="InterPro" id="IPR020584">
    <property type="entry name" value="DNA_recomb/repair_RecA_CS"/>
</dbReference>
<dbReference type="InterPro" id="IPR027417">
    <property type="entry name" value="P-loop_NTPase"/>
</dbReference>
<dbReference type="InterPro" id="IPR049261">
    <property type="entry name" value="RecA-like_C"/>
</dbReference>
<dbReference type="InterPro" id="IPR049428">
    <property type="entry name" value="RecA-like_N"/>
</dbReference>
<dbReference type="InterPro" id="IPR020588">
    <property type="entry name" value="RecA_ATP-bd"/>
</dbReference>
<dbReference type="InterPro" id="IPR023400">
    <property type="entry name" value="RecA_C_sf"/>
</dbReference>
<dbReference type="InterPro" id="IPR020587">
    <property type="entry name" value="RecA_monomer-monomer_interface"/>
</dbReference>
<dbReference type="NCBIfam" id="TIGR02012">
    <property type="entry name" value="tigrfam_recA"/>
    <property type="match status" value="1"/>
</dbReference>
<dbReference type="PANTHER" id="PTHR45900:SF1">
    <property type="entry name" value="MITOCHONDRIAL DNA REPAIR PROTEIN RECA HOMOLOG-RELATED"/>
    <property type="match status" value="1"/>
</dbReference>
<dbReference type="PANTHER" id="PTHR45900">
    <property type="entry name" value="RECA"/>
    <property type="match status" value="1"/>
</dbReference>
<dbReference type="Pfam" id="PF00154">
    <property type="entry name" value="RecA"/>
    <property type="match status" value="1"/>
</dbReference>
<dbReference type="Pfam" id="PF21096">
    <property type="entry name" value="RecA_C"/>
    <property type="match status" value="1"/>
</dbReference>
<dbReference type="PRINTS" id="PR00142">
    <property type="entry name" value="RECA"/>
</dbReference>
<dbReference type="SMART" id="SM00382">
    <property type="entry name" value="AAA"/>
    <property type="match status" value="1"/>
</dbReference>
<dbReference type="SUPFAM" id="SSF52540">
    <property type="entry name" value="P-loop containing nucleoside triphosphate hydrolases"/>
    <property type="match status" value="1"/>
</dbReference>
<dbReference type="SUPFAM" id="SSF54752">
    <property type="entry name" value="RecA protein, C-terminal domain"/>
    <property type="match status" value="1"/>
</dbReference>
<dbReference type="PROSITE" id="PS00321">
    <property type="entry name" value="RECA_1"/>
    <property type="match status" value="1"/>
</dbReference>
<dbReference type="PROSITE" id="PS50162">
    <property type="entry name" value="RECA_2"/>
    <property type="match status" value="1"/>
</dbReference>
<dbReference type="PROSITE" id="PS50163">
    <property type="entry name" value="RECA_3"/>
    <property type="match status" value="1"/>
</dbReference>